<dbReference type="EMBL" id="AF381627">
    <property type="protein sequence ID" value="AAL12000.1"/>
    <property type="molecule type" value="mRNA"/>
</dbReference>
<dbReference type="EMBL" id="AF381628">
    <property type="protein sequence ID" value="AAL12001.1"/>
    <property type="molecule type" value="mRNA"/>
</dbReference>
<dbReference type="EMBL" id="AF381629">
    <property type="protein sequence ID" value="AAL12002.1"/>
    <property type="molecule type" value="mRNA"/>
</dbReference>
<dbReference type="EMBL" id="BX284605">
    <property type="protein sequence ID" value="CAB60478.2"/>
    <property type="molecule type" value="Genomic_DNA"/>
</dbReference>
<dbReference type="EMBL" id="BX284605">
    <property type="protein sequence ID" value="CAB60479.2"/>
    <property type="molecule type" value="Genomic_DNA"/>
</dbReference>
<dbReference type="EMBL" id="BX284605">
    <property type="protein sequence ID" value="CAR64688.1"/>
    <property type="molecule type" value="Genomic_DNA"/>
</dbReference>
<dbReference type="EMBL" id="BX284605">
    <property type="protein sequence ID" value="SAP35600.1"/>
    <property type="molecule type" value="Genomic_DNA"/>
</dbReference>
<dbReference type="RefSeq" id="NP_001024212.1">
    <molecule id="Q9U2Z0-1"/>
    <property type="nucleotide sequence ID" value="NM_001029041.3"/>
</dbReference>
<dbReference type="RefSeq" id="NP_001024213.1">
    <molecule id="Q9U2Z0-2"/>
    <property type="nucleotide sequence ID" value="NM_001029042.5"/>
</dbReference>
<dbReference type="RefSeq" id="NP_001129914.1">
    <molecule id="Q9U2Z0-3"/>
    <property type="nucleotide sequence ID" value="NM_001136442.4"/>
</dbReference>
<dbReference type="RefSeq" id="NP_001317838.1">
    <molecule id="Q9U2Z0-4"/>
    <property type="nucleotide sequence ID" value="NM_001330887.2"/>
</dbReference>
<dbReference type="SMR" id="Q9U2Z0"/>
<dbReference type="DIP" id="DIP-26603N"/>
<dbReference type="FunCoup" id="Q9U2Z0">
    <property type="interactions" value="140"/>
</dbReference>
<dbReference type="IntAct" id="Q9U2Z0">
    <property type="interactions" value="9"/>
</dbReference>
<dbReference type="MINT" id="Q9U2Z0"/>
<dbReference type="STRING" id="6239.Y113G7A.6a.1"/>
<dbReference type="PaxDb" id="6239-Y113G7A.6a"/>
<dbReference type="EnsemblMetazoa" id="Y113G7A.6a.1">
    <molecule id="Q9U2Z0-1"/>
    <property type="protein sequence ID" value="Y113G7A.6a.1"/>
    <property type="gene ID" value="WBGene00006652"/>
</dbReference>
<dbReference type="EnsemblMetazoa" id="Y113G7A.6b.1">
    <molecule id="Q9U2Z0-2"/>
    <property type="protein sequence ID" value="Y113G7A.6b.1"/>
    <property type="gene ID" value="WBGene00006652"/>
</dbReference>
<dbReference type="EnsemblMetazoa" id="Y113G7A.6c.1">
    <molecule id="Q9U2Z0-3"/>
    <property type="protein sequence ID" value="Y113G7A.6c.1"/>
    <property type="gene ID" value="WBGene00006652"/>
</dbReference>
<dbReference type="EnsemblMetazoa" id="Y113G7A.6d.1">
    <molecule id="Q9U2Z0-4"/>
    <property type="protein sequence ID" value="Y113G7A.6d.1"/>
    <property type="gene ID" value="WBGene00006652"/>
</dbReference>
<dbReference type="GeneID" id="180313"/>
<dbReference type="KEGG" id="cel:CELE_Y113G7A.6"/>
<dbReference type="AGR" id="WB:WBGene00006652"/>
<dbReference type="CTD" id="180313"/>
<dbReference type="WormBase" id="Y113G7A.6a">
    <molecule id="Q9U2Z0-1"/>
    <property type="protein sequence ID" value="CE31090"/>
    <property type="gene ID" value="WBGene00006652"/>
    <property type="gene designation" value="ttx-1"/>
</dbReference>
<dbReference type="WormBase" id="Y113G7A.6b">
    <molecule id="Q9U2Z0-2"/>
    <property type="protein sequence ID" value="CE31091"/>
    <property type="gene ID" value="WBGene00006652"/>
    <property type="gene designation" value="ttx-1"/>
</dbReference>
<dbReference type="WormBase" id="Y113G7A.6c">
    <molecule id="Q9U2Z0-3"/>
    <property type="protein sequence ID" value="CE43026"/>
    <property type="gene ID" value="WBGene00006652"/>
    <property type="gene designation" value="ttx-1"/>
</dbReference>
<dbReference type="WormBase" id="Y113G7A.6d">
    <molecule id="Q9U2Z0-4"/>
    <property type="protein sequence ID" value="CE51681"/>
    <property type="gene ID" value="WBGene00006652"/>
    <property type="gene designation" value="ttx-1"/>
</dbReference>
<dbReference type="eggNOG" id="KOG2251">
    <property type="taxonomic scope" value="Eukaryota"/>
</dbReference>
<dbReference type="GeneTree" id="ENSGT00940000167436"/>
<dbReference type="HOGENOM" id="CLU_064370_1_0_1"/>
<dbReference type="InParanoid" id="Q9U2Z0"/>
<dbReference type="OMA" id="MAHKIQL"/>
<dbReference type="OrthoDB" id="6159439at2759"/>
<dbReference type="PRO" id="PR:Q9U2Z0"/>
<dbReference type="Proteomes" id="UP000001940">
    <property type="component" value="Chromosome V"/>
</dbReference>
<dbReference type="Bgee" id="WBGene00006652">
    <property type="expression patterns" value="Expressed in pharyngeal muscle cell (C elegans) and 3 other cell types or tissues"/>
</dbReference>
<dbReference type="ExpressionAtlas" id="Q9U2Z0">
    <property type="expression patterns" value="baseline and differential"/>
</dbReference>
<dbReference type="GO" id="GO:0005634">
    <property type="term" value="C:nucleus"/>
    <property type="evidence" value="ECO:0000314"/>
    <property type="project" value="WormBase"/>
</dbReference>
<dbReference type="GO" id="GO:0003700">
    <property type="term" value="F:DNA-binding transcription factor activity"/>
    <property type="evidence" value="ECO:0000314"/>
    <property type="project" value="WormBase"/>
</dbReference>
<dbReference type="GO" id="GO:0000981">
    <property type="term" value="F:DNA-binding transcription factor activity, RNA polymerase II-specific"/>
    <property type="evidence" value="ECO:0000318"/>
    <property type="project" value="GO_Central"/>
</dbReference>
<dbReference type="GO" id="GO:0000978">
    <property type="term" value="F:RNA polymerase II cis-regulatory region sequence-specific DNA binding"/>
    <property type="evidence" value="ECO:0000318"/>
    <property type="project" value="GO_Central"/>
</dbReference>
<dbReference type="GO" id="GO:0000977">
    <property type="term" value="F:RNA polymerase II transcription regulatory region sequence-specific DNA binding"/>
    <property type="evidence" value="ECO:0000314"/>
    <property type="project" value="WormBase"/>
</dbReference>
<dbReference type="GO" id="GO:0009792">
    <property type="term" value="P:embryo development ending in birth or egg hatching"/>
    <property type="evidence" value="ECO:0000315"/>
    <property type="project" value="WormBase"/>
</dbReference>
<dbReference type="GO" id="GO:0030182">
    <property type="term" value="P:neuron differentiation"/>
    <property type="evidence" value="ECO:0000315"/>
    <property type="project" value="WormBase"/>
</dbReference>
<dbReference type="GO" id="GO:0045944">
    <property type="term" value="P:positive regulation of transcription by RNA polymerase II"/>
    <property type="evidence" value="ECO:0000315"/>
    <property type="project" value="WormBase"/>
</dbReference>
<dbReference type="GO" id="GO:0032534">
    <property type="term" value="P:regulation of microvillus assembly"/>
    <property type="evidence" value="ECO:0000315"/>
    <property type="project" value="WormBase"/>
</dbReference>
<dbReference type="GO" id="GO:1902855">
    <property type="term" value="P:regulation of non-motile cilium assembly"/>
    <property type="evidence" value="ECO:0000315"/>
    <property type="project" value="WormBase"/>
</dbReference>
<dbReference type="GO" id="GO:0006357">
    <property type="term" value="P:regulation of transcription by RNA polymerase II"/>
    <property type="evidence" value="ECO:0000318"/>
    <property type="project" value="GO_Central"/>
</dbReference>
<dbReference type="GO" id="GO:0040040">
    <property type="term" value="P:thermosensory behavior"/>
    <property type="evidence" value="ECO:0000315"/>
    <property type="project" value="WormBase"/>
</dbReference>
<dbReference type="GO" id="GO:0006366">
    <property type="term" value="P:transcription by RNA polymerase II"/>
    <property type="evidence" value="ECO:0000315"/>
    <property type="project" value="WormBase"/>
</dbReference>
<dbReference type="CDD" id="cd00086">
    <property type="entry name" value="homeodomain"/>
    <property type="match status" value="1"/>
</dbReference>
<dbReference type="FunFam" id="1.10.10.60:FF:000068">
    <property type="entry name" value="Orthodenticle homeobox 1"/>
    <property type="match status" value="1"/>
</dbReference>
<dbReference type="Gene3D" id="1.10.10.60">
    <property type="entry name" value="Homeodomain-like"/>
    <property type="match status" value="1"/>
</dbReference>
<dbReference type="InterPro" id="IPR001356">
    <property type="entry name" value="HD"/>
</dbReference>
<dbReference type="InterPro" id="IPR017970">
    <property type="entry name" value="Homeobox_CS"/>
</dbReference>
<dbReference type="InterPro" id="IPR009057">
    <property type="entry name" value="Homeodomain-like_sf"/>
</dbReference>
<dbReference type="PANTHER" id="PTHR45793">
    <property type="entry name" value="HOMEOBOX PROTEIN"/>
    <property type="match status" value="1"/>
</dbReference>
<dbReference type="PANTHER" id="PTHR45793:SF5">
    <property type="entry name" value="HOMEOTIC PROTEIN OCELLILESS"/>
    <property type="match status" value="1"/>
</dbReference>
<dbReference type="Pfam" id="PF00046">
    <property type="entry name" value="Homeodomain"/>
    <property type="match status" value="1"/>
</dbReference>
<dbReference type="SMART" id="SM00389">
    <property type="entry name" value="HOX"/>
    <property type="match status" value="1"/>
</dbReference>
<dbReference type="SUPFAM" id="SSF46689">
    <property type="entry name" value="Homeodomain-like"/>
    <property type="match status" value="1"/>
</dbReference>
<dbReference type="PROSITE" id="PS00027">
    <property type="entry name" value="HOMEOBOX_1"/>
    <property type="match status" value="1"/>
</dbReference>
<dbReference type="PROSITE" id="PS50071">
    <property type="entry name" value="HOMEOBOX_2"/>
    <property type="match status" value="1"/>
</dbReference>
<feature type="chain" id="PRO_0000456720" description="Homeobox protein ttx-1">
    <location>
        <begin position="1"/>
        <end position="391"/>
    </location>
</feature>
<feature type="DNA-binding region" description="Homeobox" evidence="1">
    <location>
        <begin position="199"/>
        <end position="258"/>
    </location>
</feature>
<feature type="region of interest" description="Disordered" evidence="3">
    <location>
        <begin position="1"/>
        <end position="106"/>
    </location>
</feature>
<feature type="region of interest" description="Disordered" evidence="3">
    <location>
        <begin position="254"/>
        <end position="300"/>
    </location>
</feature>
<feature type="region of interest" description="Disordered" evidence="3">
    <location>
        <begin position="312"/>
        <end position="347"/>
    </location>
</feature>
<feature type="compositionally biased region" description="Polar residues" evidence="3">
    <location>
        <begin position="1"/>
        <end position="10"/>
    </location>
</feature>
<feature type="compositionally biased region" description="Low complexity" evidence="3">
    <location>
        <begin position="34"/>
        <end position="64"/>
    </location>
</feature>
<feature type="compositionally biased region" description="Polar residues" evidence="3">
    <location>
        <begin position="86"/>
        <end position="106"/>
    </location>
</feature>
<feature type="compositionally biased region" description="Low complexity" evidence="3">
    <location>
        <begin position="264"/>
        <end position="274"/>
    </location>
</feature>
<feature type="compositionally biased region" description="Polar residues" evidence="3">
    <location>
        <begin position="289"/>
        <end position="299"/>
    </location>
</feature>
<feature type="compositionally biased region" description="Polar residues" evidence="3">
    <location>
        <begin position="315"/>
        <end position="334"/>
    </location>
</feature>
<feature type="compositionally biased region" description="Low complexity" evidence="3">
    <location>
        <begin position="335"/>
        <end position="347"/>
    </location>
</feature>
<feature type="splice variant" id="VSP_061671" description="In isoform c." evidence="9">
    <location>
        <begin position="1"/>
        <end position="37"/>
    </location>
</feature>
<feature type="splice variant" id="VSP_061672" description="In isoform d." evidence="9">
    <original>MSLTSSSAPSDSIVEL</original>
    <variation>MEFQ</variation>
    <location>
        <begin position="1"/>
        <end position="16"/>
    </location>
</feature>
<feature type="splice variant" id="VSP_061673" description="In isoform b." evidence="9">
    <location>
        <begin position="67"/>
        <end position="119"/>
    </location>
</feature>
<feature type="mutagenesis site" description="In ns259; homozygous sterile. Significantly reduced expression of VEGF-related protein ver-1 in AMsh glia when cultured at 25 degrees Celsius." evidence="6">
    <original>P</original>
    <variation>L</variation>
    <location>
        <position position="125"/>
    </location>
</feature>
<feature type="mutagenesis site" description="In ns235 and ns252; abolishes expression of VEGF-related protein ver-1 in AMsh glia when cultured at 25 degrees Celsius." evidence="6">
    <original>E</original>
    <variation>K</variation>
    <location>
        <position position="230"/>
    </location>
</feature>
<feature type="mutagenesis site" description="In oy26; defects in morphology of the AFD neuron sensory endings. Cryophilic thermotaxis behavior when placed on a thermal gradient - preference for &lt;20 degrees Celsius. Significantly reduced expression of VEGF-related protein ver-1 in AMsh glia in the dauer larval stage." evidence="4 5 6">
    <original>A</original>
    <variation>V</variation>
    <location>
        <position position="233"/>
    </location>
</feature>
<feature type="mutagenesis site" description="In ns260; homozygous lethal. Significantly reduced expression of VEGF-related protein ver-1 in AMsh glia when cultured at 25 degrees Celsius." evidence="6">
    <location>
        <begin position="324"/>
        <end position="391"/>
    </location>
</feature>
<proteinExistence type="evidence at protein level"/>
<evidence type="ECO:0000255" key="1">
    <source>
        <dbReference type="PROSITE-ProRule" id="PRU00108"/>
    </source>
</evidence>
<evidence type="ECO:0000255" key="2">
    <source>
        <dbReference type="RuleBase" id="RU000682"/>
    </source>
</evidence>
<evidence type="ECO:0000256" key="3">
    <source>
        <dbReference type="SAM" id="MobiDB-lite"/>
    </source>
</evidence>
<evidence type="ECO:0000269" key="4">
    <source>
    </source>
</evidence>
<evidence type="ECO:0000269" key="5">
    <source>
    </source>
</evidence>
<evidence type="ECO:0000269" key="6">
    <source>
    </source>
</evidence>
<evidence type="ECO:0000269" key="7">
    <source>
    </source>
</evidence>
<evidence type="ECO:0000303" key="8">
    <source>
    </source>
</evidence>
<evidence type="ECO:0000305" key="9"/>
<evidence type="ECO:0000312" key="10">
    <source>
        <dbReference type="EMBL" id="AAL12000.1"/>
    </source>
</evidence>
<evidence type="ECO:0000312" key="11">
    <source>
        <dbReference type="EMBL" id="AAL12001.1"/>
    </source>
</evidence>
<evidence type="ECO:0000312" key="12">
    <source>
        <dbReference type="EMBL" id="AAL12002.1"/>
    </source>
</evidence>
<evidence type="ECO:0000312" key="13">
    <source>
        <dbReference type="Proteomes" id="UP000001940"/>
    </source>
</evidence>
<evidence type="ECO:0000312" key="14">
    <source>
        <dbReference type="WormBase" id="Y113G7A.6a"/>
    </source>
</evidence>
<evidence type="ECO:0000312" key="15">
    <source>
        <dbReference type="WormBase" id="Y113G7A.6b"/>
    </source>
</evidence>
<evidence type="ECO:0000312" key="16">
    <source>
        <dbReference type="WormBase" id="Y113G7A.6c"/>
    </source>
</evidence>
<evidence type="ECO:0000312" key="17">
    <source>
        <dbReference type="WormBase" id="Y113G7A.6d"/>
    </source>
</evidence>
<gene>
    <name evidence="14" type="primary">ttx-1</name>
    <name evidence="14" type="ORF">Y113G7A.6</name>
</gene>
<protein>
    <recommendedName>
        <fullName evidence="9">Homeobox protein ttx-1</fullName>
    </recommendedName>
    <alternativeName>
        <fullName evidence="14">Abnormal thermotaxis protein 1</fullName>
    </alternativeName>
    <alternativeName>
        <fullName evidence="8">OTX homeobox homolog ttx-1</fullName>
    </alternativeName>
</protein>
<organism evidence="13">
    <name type="scientific">Caenorhabditis elegans</name>
    <dbReference type="NCBI Taxonomy" id="6239"/>
    <lineage>
        <taxon>Eukaryota</taxon>
        <taxon>Metazoa</taxon>
        <taxon>Ecdysozoa</taxon>
        <taxon>Nematoda</taxon>
        <taxon>Chromadorea</taxon>
        <taxon>Rhabditida</taxon>
        <taxon>Rhabditina</taxon>
        <taxon>Rhabditomorpha</taxon>
        <taxon>Rhabditoidea</taxon>
        <taxon>Rhabditidae</taxon>
        <taxon>Peloderinae</taxon>
        <taxon>Caenorhabditis</taxon>
    </lineage>
</organism>
<keyword id="KW-0025">Alternative splicing</keyword>
<keyword id="KW-0217">Developmental protein</keyword>
<keyword id="KW-0238">DNA-binding</keyword>
<keyword id="KW-0371">Homeobox</keyword>
<keyword id="KW-0524">Neurogenesis</keyword>
<keyword id="KW-0539">Nucleus</keyword>
<keyword id="KW-1185">Reference proteome</keyword>
<comment type="function">
    <text evidence="4 5 6 7">Probable transcription factor (PubMed:21350017, PubMed:25614239). Binds to a motif including the sequence 5'-TAA[TG]-3' in regulatory promoter elements (PubMed:21350017, PubMed:25614239). Modulates expression of its own, and of various other, genes in the AFD thermosensory neurons or AMsh amphid sheath glia, incuding the nuclear hormone receptor nhr-38, the LIM homeobox ceh-14, cyclic nucleotide-gated channel tax-2, receptor-type guanylyl cyclase gcy-8 and VEGF-related protein ver-1 (PubMed:11580895, PubMed:21350017, PubMed:25614239). Required for the development and cell fate of AFD neurons (PubMed:11580895, PubMed:21350017, PubMed:22298710). In concert with ceh-14, perhaps as components in a complex, specifies identity of AFD neurons, acting by synergistically regulating gcy-8, gcy-18 and other genes (PubMed:25614239). Involved in thermosensory behavior, thereby regulating entry and exit into the dauer larval stage of development (PubMed:11580895). Required in amphid sheath AMsh glia remodeling during entry into dauer stage, acting by positively regulating the expression of ver-1 in AMsh of amphid sensory neurons (PubMed:21350017, PubMed:22298710). May be essential for early development (PubMed:22298710).</text>
</comment>
<comment type="interaction">
    <interactant intactId="EBI-330989">
        <id>Q9U2Z0</id>
    </interactant>
    <interactant intactId="EBI-325337">
        <id>G5EC32</id>
        <label>sorb-1</label>
    </interactant>
    <organismsDiffer>false</organismsDiffer>
    <experiments>6</experiments>
</comment>
<comment type="subcellular location">
    <subcellularLocation>
        <location evidence="1 2 4">Nucleus</location>
    </subcellularLocation>
</comment>
<comment type="alternative products">
    <event type="alternative splicing"/>
    <isoform>
        <id>Q9U2Z0-1</id>
        <name evidence="14">a</name>
        <sequence type="displayed"/>
    </isoform>
    <isoform>
        <id>Q9U2Z0-2</id>
        <name evidence="15">b</name>
        <sequence type="described" ref="VSP_061673"/>
    </isoform>
    <isoform>
        <id>Q9U2Z0-3</id>
        <name evidence="16">c</name>
        <sequence type="described" ref="VSP_061671"/>
    </isoform>
    <isoform>
        <id>Q9U2Z0-4</id>
        <name evidence="17">d</name>
        <sequence type="described" ref="VSP_061672"/>
    </isoform>
</comment>
<comment type="tissue specificity">
    <text evidence="4 5">Expressed in the bilateral AFD neurons as well as in the nine pharyngeal marginal cells (PubMed:11580895). Expressed in amphid sheath AMsh and phasmid sheath PHsh glia (PubMed:21350017).</text>
</comment>
<comment type="similarity">
    <text evidence="9">Belongs to the paired homeobox family. Bicoid subfamily.</text>
</comment>
<sequence>MSLTSSSAPSDSIVELIQSQNLSGSGSGTGGNTGSTTMNSGNFIPTPSLTGTGASQSSGSASSGNFVSPDETDTKPSPSLMDHNDPTSSLSQQLAQGATLTSPYSTTTVDPSSLYFQLSPMSYIPNVSSATTVAAANMSAYFNQKSAYPTSHLGFPSNVGSHSFLQSNMYIPSSLSDCPTATMGSMSWNANQPGFSRKQRRERTTFTRNQLEILESYFVKTRYPDIFMREDMAHKIQLPESRVQVWFKNRRAKARQQKKTLAPSNSGVTCSGNNGSTGGGSSNGSTGSEVQPSSPATTDSELKFSEVIKEECDEQSISPSADDQKGVNSYINPISSSSGTTSYNGTSSFRPQAQYPYASYPAYDFQYSQSNTNSTNTYTLDGNSTWKFQMS</sequence>
<reference evidence="13" key="1">
    <citation type="journal article" date="1998" name="Science">
        <title>Genome sequence of the nematode C. elegans: a platform for investigating biology.</title>
        <authorList>
            <consortium name="The C. elegans sequencing consortium"/>
        </authorList>
    </citation>
    <scope>NUCLEOTIDE SEQUENCE [LARGE SCALE GENOMIC DNA]</scope>
    <source>
        <strain evidence="13">Bristol N2</strain>
    </source>
</reference>
<reference evidence="10 11 12" key="2">
    <citation type="journal article" date="2001" name="Neuron">
        <title>Specification of thermosensory neuron fate in C. elegans requires ttx-1, a homolog of otd/Otx.</title>
        <authorList>
            <person name="Satterlee J.S."/>
            <person name="Sasakura H."/>
            <person name="Kuhara A."/>
            <person name="Berkeley M."/>
            <person name="Mori I."/>
            <person name="Sengupta P."/>
        </authorList>
    </citation>
    <scope>NUCLEOTIDE SEQUENCE [MRNA] OF 20-391 (ISOFORM A)</scope>
    <scope>NUCLEOTIDE SEQUENCE [MRNA] OF 7-391 (ISOFORM B)</scope>
    <scope>NUCLEOTIDE SEQUENCE [MRNA] OF 38-260 (ISOFORM C)</scope>
    <scope>FUNCTION</scope>
    <scope>SUBCELLULAR LOCATION</scope>
    <scope>TISSUE SPECIFICITY</scope>
    <scope>MUTAGENESIS OF ALA-233</scope>
</reference>
<reference evidence="9" key="3">
    <citation type="journal article" date="2011" name="Development">
        <title>Glia delimit shape changes of sensory neuron receptive endings in C. elegans.</title>
        <authorList>
            <person name="Procko C."/>
            <person name="Lu Y."/>
            <person name="Shaham S."/>
        </authorList>
    </citation>
    <scope>FUNCTION</scope>
    <scope>TISSUE SPECIFICITY</scope>
    <scope>MUTAGENESIS OF ALA-233</scope>
</reference>
<reference evidence="9" key="4">
    <citation type="journal article" date="2012" name="Genetics">
        <title>Sensory organ remodeling in Caenorhabditis elegans requires the zinc-finger protein ZTF-16.</title>
        <authorList>
            <person name="Procko C."/>
            <person name="Lu Y."/>
            <person name="Shaham S."/>
        </authorList>
    </citation>
    <scope>FUNCTION</scope>
    <scope>MUTAGENESIS OF PRO-125; GLU-230; ALA-233 AND 324-GLN--SER-391</scope>
</reference>
<reference evidence="9" key="5">
    <citation type="journal article" date="2015" name="Dev. Biol.">
        <title>Co-expression of the transcription factors CEH-14 and TTX-1 regulates AFD neuron-specific genes gcy-8 and gcy-18 in C. elegans.</title>
        <authorList>
            <person name="Kagoshima H."/>
            <person name="Kohara Y."/>
        </authorList>
    </citation>
    <scope>FUNCTION</scope>
</reference>
<accession>Q9U2Z0</accession>
<accession>A0A168HA93</accession>
<accession>B5QSI6</accession>
<accession>Q95W16</accession>
<accession>Q95W17</accession>
<accession>Q95W18</accession>
<accession>Q9U2Y9</accession>
<name>OTXH_CAEEL</name>